<comment type="function">
    <text evidence="4 6 7 8 9 10 11 12 13 14 15 16 17 18 19">Effector cytokine of innate and adaptive immune system involved in antimicrobial host defense and maintenance of tissue integrity (PubMed:18025225, PubMed:19144317, PubMed:26431948). Signals via IL17RA-IL17RC heterodimeric receptor complex, triggering homotypic interaction of IL17RA and IL17RC chains with TRAF3IP2 adapter. This leads to downstream TRAF6-mediated activation of NF-kappa-B and MAPkinase pathways ultimately resulting in transcriptional activation of cytokines, chemokines, antimicrobial peptides and matrix metalloproteinases, with potential strong immune inflammation (PubMed:16200068, PubMed:17911633, PubMed:19144317, PubMed:26431948). Plays an important role in connecting T cell-mediated adaptive immunity and acute inflammatory response to destroy extracellular bacteria and fungi. As a signature effector cytokine of T-helper 17 cells (Th17), primarily induces neutrophil activation and recruitment at infection and inflammatory sites (PubMed:18025225). In airway epithelium, mediates neutrophil chemotaxis via induction of CXCL1 and CXCL5 chemokines (PubMed:18025225, PubMed:27923703). In secondary lymphoid organs, contributes to germinal center formation by regulating the chemotactic response of B cells to CXCL12 and CXCL13, enhancing retention of B cells within the germinal centers, B cell somatic hypermutation rate and selection toward plasma cells (PubMed:18157131). Effector cytokine of a subset of gamma-delta T cells that functions as part of an inflammatory circuit downstream IL1B, TLR2 and IL23A-IL12B to promote neutrophil recruitment for efficient bacterial clearance (PubMed:17372004, PubMed:20364087, PubMed:28709803). Effector cytokine of innate immune cells including invariant natural killer cell (iNKT) and group 3 innate lymphoid cells that mediate initial neutrophilic inflammation (PubMed:17470641, PubMed:23255360). Involved in the maintenance of the integrity of epithelial barriers during homeostasis and pathogen infection. Upon acute injury, has a direct role in epithelial barrier formation by regulating OCLN localization and tight junction biogenesis (PubMed:26431948). As part of the mucosal immune response induced by commensal bacteria, enhances host's ability to resist pathogenic bacterial and fungal infections by promoting neutrophil recruitment and antimicrobial peptides release (PubMed:28709803). In synergy with IL17F, mediates the production of antimicrobial beta-defensins DEFB1, DEFB103A, and DEFB104A by mucosal epithelial cells, limiting the entry of microbes through the epithelial barriers (PubMed:19144317). Involved in antiviral host defense through various mechanisms (PubMed:21946434, PubMed:26735852, PubMed:27795421). Enhances immunity against West Nile virus by promoting T cell cytotoxicity (PubMed:27795421). May play a beneficial role in influenza A virus (H5N1) infection by enhancing B cell recruitment and immune response in the lung (PubMed:21946434). Contributes to influenza A virus (H1N1) clearance by driving the differentiation of B-1a B cells, providing for production of virus-specific IgM antibodies at first line of host defense (PubMed:26735852).</text>
</comment>
<comment type="subunit">
    <text evidence="2 9">Homodimer (PubMed:18025225). Forms complexes with IL17RA and IL17RC receptors with 2:1 binding stoichiometry: two receptor chains for one interleukin molecule (By similarity). IL17A homodimer preferentially drives the formation of IL17RA-IL17RC heterodimeric receptor complex (By similarity). IL17A homodimer adopts an asymmetrical ternary structure with one IL17RA molecule, allowing for high affinity interactions of one IL17A monomer with one IL17RA molecule (via D1 and D2 domains), while disfavoring binding of a second IL17RA molecule on the other IL17A monomer (By similarity). Heterodimer with IL17F (PubMed:18025225). IL17A-IL17F forms complexes with IL17RA-IL17RC, but with lower affinity when compared to IL17A homodimer (By similarity). IL17RA and IL17RC chains cannot distinguish between IL17A and IL17F molecules, potentially enabling the formation of topologically distinct complexes (By similarity).</text>
</comment>
<comment type="subcellular location">
    <subcellularLocation>
        <location evidence="9">Secreted</location>
    </subcellularLocation>
</comment>
<comment type="tissue specificity">
    <text evidence="5 6 7 9 12 14 15 19">Expressed by Th17 cell lineage (at protein level). The expression pattern reflects the differentiation state, with IL17A-IL17F heterodimers produced at higher levels than IL17A-IL17A and IL17F-IL17F dimers in fully differentiated Th17 cells (PubMed:16990136, PubMed:18025225). Expressed in innate lymphoid cells (at protein level) (PubMed:23255360, PubMed:28709803). Expressed in gamma-delta T cell subsets (at protein level) (PubMed:17372004, PubMed:20364087, PubMed:26431948, PubMed:28709803). Expressed in iNKT cells (at protein level) (PubMed:17470641).</text>
</comment>
<comment type="induction">
    <text evidence="4 5 6 7 9 12 14 15 19">Induced upon differentiation of CD4-positive T cells toward Th17 effector cells upon antigen receptor binding in the presence of IL6 and TGFB1 (PubMed:16200068, PubMed:16990136, PubMed:18025225). Up-regulated by IL23A-IL12B, IL1B and TNF and inhibited by IFNG and IL4 (PubMed:16200068, PubMed:18025225). Up-regulated by pro-inflammatory cytokines in response to microbes in various immune cells: induced in innate lymphoid cells upon fungal infection, in Vdelta4-positive gamma-delta T cells upon C.mastitidis infection, in Vdelta5-positive gamma-delta T cells upon S.aureus infection and in Vdelta1-positive gamma-delta T cells upon E.coli infection (PubMed:17372004, PubMed:20364087, PubMed:23255360, PubMed:28709803). Induced in gamma-delta T cells in intestinal lamina propria upon acute injury (PubMed:26431948). Induced in KLRB1/NK1.1-negative iNKT cell subset upon CD1D stimulation (PubMed:17470641).</text>
</comment>
<comment type="disruption phenotype">
    <text evidence="11 15 16 17">Mutant mice are born at the expected Mendelian ratio, are fertile, and have no apparent phenotypic abnormalities. They are protected against chronic autoimmune and allergic reactions, as observed in models of spontaneous or induced rheumatoid arthritis, experimental autoimmune encephalomyelitis and chemical allergen-induced contact hypersensitivity (PubMed:19144317). In a model of acute intestinal injury, mutant mice show epithelial disruption, presence of abscesses associated with enhanced bleeding into the mucosal lumen and increased cellular infiltrate into the submucosal layer (PubMed:26431948). Mutant mice show increased susceptibility to West Nile virus infection characterized by deficient virus clearance from brain and spleen (PubMed:27795421). Mutant mice are deficient in clearing influenza A virus (H1N1) pulmonary infection due to increased immune inflammation and lung damage (PubMed:26735852).</text>
</comment>
<comment type="similarity">
    <text evidence="20">Belongs to the IL-17 family.</text>
</comment>
<keyword id="KW-1064">Adaptive immunity</keyword>
<keyword id="KW-0202">Cytokine</keyword>
<keyword id="KW-1015">Disulfide bond</keyword>
<keyword id="KW-0325">Glycoprotein</keyword>
<keyword id="KW-0391">Immunity</keyword>
<keyword id="KW-0395">Inflammatory response</keyword>
<keyword id="KW-0399">Innate immunity</keyword>
<keyword id="KW-1185">Reference proteome</keyword>
<keyword id="KW-0964">Secreted</keyword>
<keyword id="KW-0732">Signal</keyword>
<dbReference type="EMBL" id="U43088">
    <property type="protein sequence ID" value="AAB05222.1"/>
    <property type="molecule type" value="mRNA"/>
</dbReference>
<dbReference type="EMBL" id="U35108">
    <property type="protein sequence ID" value="AAA93253.1"/>
    <property type="molecule type" value="Genomic_DNA"/>
</dbReference>
<dbReference type="CCDS" id="CCDS14842.1"/>
<dbReference type="PIR" id="JC4628">
    <property type="entry name" value="JC4628"/>
</dbReference>
<dbReference type="RefSeq" id="NP_034682.1">
    <property type="nucleotide sequence ID" value="NM_010552.3"/>
</dbReference>
<dbReference type="SMR" id="Q62386"/>
<dbReference type="CORUM" id="Q62386"/>
<dbReference type="FunCoup" id="Q62386">
    <property type="interactions" value="377"/>
</dbReference>
<dbReference type="IntAct" id="Q62386">
    <property type="interactions" value="2"/>
</dbReference>
<dbReference type="STRING" id="10090.ENSMUSP00000027061"/>
<dbReference type="ChEMBL" id="CHEMBL4879476"/>
<dbReference type="GlyCosmos" id="Q62386">
    <property type="glycosylation" value="1 site, No reported glycans"/>
</dbReference>
<dbReference type="GlyGen" id="Q62386">
    <property type="glycosylation" value="1 site"/>
</dbReference>
<dbReference type="PhosphoSitePlus" id="Q62386"/>
<dbReference type="PaxDb" id="10090-ENSMUSP00000027061"/>
<dbReference type="Antibodypedia" id="17132">
    <property type="antibodies" value="2288 antibodies from 53 providers"/>
</dbReference>
<dbReference type="DNASU" id="16171"/>
<dbReference type="Ensembl" id="ENSMUST00000027061.5">
    <property type="protein sequence ID" value="ENSMUSP00000027061.5"/>
    <property type="gene ID" value="ENSMUSG00000025929.5"/>
</dbReference>
<dbReference type="GeneID" id="16171"/>
<dbReference type="KEGG" id="mmu:16171"/>
<dbReference type="UCSC" id="uc007aky.1">
    <property type="organism name" value="mouse"/>
</dbReference>
<dbReference type="AGR" id="MGI:107364"/>
<dbReference type="CTD" id="3605"/>
<dbReference type="MGI" id="MGI:107364">
    <property type="gene designation" value="Il17a"/>
</dbReference>
<dbReference type="VEuPathDB" id="HostDB:ENSMUSG00000025929"/>
<dbReference type="eggNOG" id="ENOG502S5A0">
    <property type="taxonomic scope" value="Eukaryota"/>
</dbReference>
<dbReference type="GeneTree" id="ENSGT00940000161882"/>
<dbReference type="HOGENOM" id="CLU_118641_0_0_1"/>
<dbReference type="InParanoid" id="Q62386"/>
<dbReference type="OMA" id="HHMNSVP"/>
<dbReference type="OrthoDB" id="6093351at2759"/>
<dbReference type="PhylomeDB" id="Q62386"/>
<dbReference type="TreeFam" id="TF314701"/>
<dbReference type="BioGRID-ORCS" id="16171">
    <property type="hits" value="2 hits in 81 CRISPR screens"/>
</dbReference>
<dbReference type="PRO" id="PR:Q62386"/>
<dbReference type="Proteomes" id="UP000000589">
    <property type="component" value="Chromosome 1"/>
</dbReference>
<dbReference type="RNAct" id="Q62386">
    <property type="molecule type" value="protein"/>
</dbReference>
<dbReference type="Bgee" id="ENSMUSG00000025929">
    <property type="expression patterns" value="Expressed in lumbar subsegment of spinal cord and 10 other cell types or tissues"/>
</dbReference>
<dbReference type="ExpressionAtlas" id="Q62386">
    <property type="expression patterns" value="baseline and differential"/>
</dbReference>
<dbReference type="GO" id="GO:0009897">
    <property type="term" value="C:external side of plasma membrane"/>
    <property type="evidence" value="ECO:0000314"/>
    <property type="project" value="MGI"/>
</dbReference>
<dbReference type="GO" id="GO:0005615">
    <property type="term" value="C:extracellular space"/>
    <property type="evidence" value="ECO:0000314"/>
    <property type="project" value="UniProtKB"/>
</dbReference>
<dbReference type="GO" id="GO:0005125">
    <property type="term" value="F:cytokine activity"/>
    <property type="evidence" value="ECO:0000314"/>
    <property type="project" value="UniProt"/>
</dbReference>
<dbReference type="GO" id="GO:0046982">
    <property type="term" value="F:protein heterodimerization activity"/>
    <property type="evidence" value="ECO:0000314"/>
    <property type="project" value="UniProtKB"/>
</dbReference>
<dbReference type="GO" id="GO:0042803">
    <property type="term" value="F:protein homodimerization activity"/>
    <property type="evidence" value="ECO:0000314"/>
    <property type="project" value="UniProtKB"/>
</dbReference>
<dbReference type="GO" id="GO:0002250">
    <property type="term" value="P:adaptive immune response"/>
    <property type="evidence" value="ECO:0007669"/>
    <property type="project" value="UniProtKB-KW"/>
</dbReference>
<dbReference type="GO" id="GO:0071347">
    <property type="term" value="P:cellular response to interleukin-1"/>
    <property type="evidence" value="ECO:0000314"/>
    <property type="project" value="MGI"/>
</dbReference>
<dbReference type="GO" id="GO:0050832">
    <property type="term" value="P:defense response to fungus"/>
    <property type="evidence" value="ECO:0000315"/>
    <property type="project" value="UniProtKB"/>
</dbReference>
<dbReference type="GO" id="GO:0050829">
    <property type="term" value="P:defense response to Gram-negative bacterium"/>
    <property type="evidence" value="ECO:0000315"/>
    <property type="project" value="UniProtKB"/>
</dbReference>
<dbReference type="GO" id="GO:0050830">
    <property type="term" value="P:defense response to Gram-positive bacterium"/>
    <property type="evidence" value="ECO:0000314"/>
    <property type="project" value="UniProtKB"/>
</dbReference>
<dbReference type="GO" id="GO:0072537">
    <property type="term" value="P:fibroblast activation"/>
    <property type="evidence" value="ECO:0007669"/>
    <property type="project" value="Ensembl"/>
</dbReference>
<dbReference type="GO" id="GO:0010467">
    <property type="term" value="P:gene expression"/>
    <property type="evidence" value="ECO:0000314"/>
    <property type="project" value="MGI"/>
</dbReference>
<dbReference type="GO" id="GO:0097530">
    <property type="term" value="P:granulocyte migration"/>
    <property type="evidence" value="ECO:0000316"/>
    <property type="project" value="ARUK-UCL"/>
</dbReference>
<dbReference type="GO" id="GO:0006954">
    <property type="term" value="P:inflammatory response"/>
    <property type="evidence" value="ECO:0007669"/>
    <property type="project" value="UniProtKB-KW"/>
</dbReference>
<dbReference type="GO" id="GO:0045087">
    <property type="term" value="P:innate immune response"/>
    <property type="evidence" value="ECO:0007669"/>
    <property type="project" value="UniProtKB-KW"/>
</dbReference>
<dbReference type="GO" id="GO:0097400">
    <property type="term" value="P:interleukin-17-mediated signaling pathway"/>
    <property type="evidence" value="ECO:0007669"/>
    <property type="project" value="Ensembl"/>
</dbReference>
<dbReference type="GO" id="GO:0038173">
    <property type="term" value="P:interleukin-17A-mediated signaling pathway"/>
    <property type="evidence" value="ECO:0007669"/>
    <property type="project" value="Ensembl"/>
</dbReference>
<dbReference type="GO" id="GO:0060729">
    <property type="term" value="P:intestinal epithelial structure maintenance"/>
    <property type="evidence" value="ECO:0000315"/>
    <property type="project" value="UniProtKB"/>
</dbReference>
<dbReference type="GO" id="GO:0030216">
    <property type="term" value="P:keratinocyte differentiation"/>
    <property type="evidence" value="ECO:0000314"/>
    <property type="project" value="MGI"/>
</dbReference>
<dbReference type="GO" id="GO:0043616">
    <property type="term" value="P:keratinocyte proliferation"/>
    <property type="evidence" value="ECO:0000315"/>
    <property type="project" value="MGI"/>
</dbReference>
<dbReference type="GO" id="GO:0106015">
    <property type="term" value="P:negative regulation of inflammatory response to wounding"/>
    <property type="evidence" value="ECO:0000314"/>
    <property type="project" value="UniProt"/>
</dbReference>
<dbReference type="GO" id="GO:0007219">
    <property type="term" value="P:Notch signaling pathway"/>
    <property type="evidence" value="ECO:0000314"/>
    <property type="project" value="MGI"/>
</dbReference>
<dbReference type="GO" id="GO:0002225">
    <property type="term" value="P:positive regulation of antimicrobial peptide production"/>
    <property type="evidence" value="ECO:0000314"/>
    <property type="project" value="UniProtKB"/>
</dbReference>
<dbReference type="GO" id="GO:1903348">
    <property type="term" value="P:positive regulation of bicellular tight junction assembly"/>
    <property type="evidence" value="ECO:0000315"/>
    <property type="project" value="UniProtKB"/>
</dbReference>
<dbReference type="GO" id="GO:2000340">
    <property type="term" value="P:positive regulation of chemokine (C-X-C motif) ligand 1 production"/>
    <property type="evidence" value="ECO:0000314"/>
    <property type="project" value="UniProtKB"/>
</dbReference>
<dbReference type="GO" id="GO:1900017">
    <property type="term" value="P:positive regulation of cytokine production involved in inflammatory response"/>
    <property type="evidence" value="ECO:0000314"/>
    <property type="project" value="MGI"/>
</dbReference>
<dbReference type="GO" id="GO:0032731">
    <property type="term" value="P:positive regulation of interleukin-1 beta production"/>
    <property type="evidence" value="ECO:0007669"/>
    <property type="project" value="Ensembl"/>
</dbReference>
<dbReference type="GO" id="GO:0032735">
    <property type="term" value="P:positive regulation of interleukin-12 production"/>
    <property type="evidence" value="ECO:0007669"/>
    <property type="project" value="Ensembl"/>
</dbReference>
<dbReference type="GO" id="GO:0032739">
    <property type="term" value="P:positive regulation of interleukin-16 production"/>
    <property type="evidence" value="ECO:0007669"/>
    <property type="project" value="Ensembl"/>
</dbReference>
<dbReference type="GO" id="GO:0032747">
    <property type="term" value="P:positive regulation of interleukin-23 production"/>
    <property type="evidence" value="ECO:0007669"/>
    <property type="project" value="Ensembl"/>
</dbReference>
<dbReference type="GO" id="GO:0032755">
    <property type="term" value="P:positive regulation of interleukin-6 production"/>
    <property type="evidence" value="ECO:0000315"/>
    <property type="project" value="UniProtKB"/>
</dbReference>
<dbReference type="GO" id="GO:0045672">
    <property type="term" value="P:positive regulation of osteoclast differentiation"/>
    <property type="evidence" value="ECO:0007669"/>
    <property type="project" value="Ensembl"/>
</dbReference>
<dbReference type="GO" id="GO:0045944">
    <property type="term" value="P:positive regulation of transcription by RNA polymerase II"/>
    <property type="evidence" value="ECO:0000316"/>
    <property type="project" value="MGI"/>
</dbReference>
<dbReference type="GO" id="GO:0032760">
    <property type="term" value="P:positive regulation of tumor necrosis factor production"/>
    <property type="evidence" value="ECO:0007669"/>
    <property type="project" value="Ensembl"/>
</dbReference>
<dbReference type="GO" id="GO:0009611">
    <property type="term" value="P:response to wounding"/>
    <property type="evidence" value="ECO:0000314"/>
    <property type="project" value="UniProt"/>
</dbReference>
<dbReference type="FunFam" id="2.10.90.10:FF:000038">
    <property type="entry name" value="Interleukin-17A"/>
    <property type="match status" value="1"/>
</dbReference>
<dbReference type="Gene3D" id="2.10.90.10">
    <property type="entry name" value="Cystine-knot cytokines"/>
    <property type="match status" value="1"/>
</dbReference>
<dbReference type="InterPro" id="IPR029034">
    <property type="entry name" value="Cystine-knot_cytokine"/>
</dbReference>
<dbReference type="InterPro" id="IPR020440">
    <property type="entry name" value="IL-17_chr"/>
</dbReference>
<dbReference type="InterPro" id="IPR010345">
    <property type="entry name" value="IL-17_fam"/>
</dbReference>
<dbReference type="Pfam" id="PF06083">
    <property type="entry name" value="IL17"/>
    <property type="match status" value="1"/>
</dbReference>
<dbReference type="PRINTS" id="PR01932">
    <property type="entry name" value="INTRLEUKIN17"/>
</dbReference>
<dbReference type="SUPFAM" id="SSF57501">
    <property type="entry name" value="Cystine-knot cytokines"/>
    <property type="match status" value="1"/>
</dbReference>
<name>IL17_MOUSE</name>
<evidence type="ECO:0000250" key="1"/>
<evidence type="ECO:0000250" key="2">
    <source>
        <dbReference type="UniProtKB" id="Q16552"/>
    </source>
</evidence>
<evidence type="ECO:0000255" key="3"/>
<evidence type="ECO:0000269" key="4">
    <source>
    </source>
</evidence>
<evidence type="ECO:0000269" key="5">
    <source>
    </source>
</evidence>
<evidence type="ECO:0000269" key="6">
    <source>
    </source>
</evidence>
<evidence type="ECO:0000269" key="7">
    <source>
    </source>
</evidence>
<evidence type="ECO:0000269" key="8">
    <source>
    </source>
</evidence>
<evidence type="ECO:0000269" key="9">
    <source>
    </source>
</evidence>
<evidence type="ECO:0000269" key="10">
    <source>
    </source>
</evidence>
<evidence type="ECO:0000269" key="11">
    <source>
    </source>
</evidence>
<evidence type="ECO:0000269" key="12">
    <source>
    </source>
</evidence>
<evidence type="ECO:0000269" key="13">
    <source>
    </source>
</evidence>
<evidence type="ECO:0000269" key="14">
    <source>
    </source>
</evidence>
<evidence type="ECO:0000269" key="15">
    <source>
    </source>
</evidence>
<evidence type="ECO:0000269" key="16">
    <source>
    </source>
</evidence>
<evidence type="ECO:0000269" key="17">
    <source>
    </source>
</evidence>
<evidence type="ECO:0000269" key="18">
    <source>
    </source>
</evidence>
<evidence type="ECO:0000269" key="19">
    <source>
    </source>
</evidence>
<evidence type="ECO:0000305" key="20"/>
<gene>
    <name type="primary">Il17a</name>
    <name type="synonym">Ctla8</name>
    <name type="synonym">Il17</name>
</gene>
<reference key="1">
    <citation type="journal article" date="1996" name="J. Interferon Cytokine Res.">
        <title>Mouse IL-17: a cytokine preferentially expressed by alpha beta TCR + CD4-CD8-T cells.</title>
        <authorList>
            <person name="Kennedy J."/>
            <person name="Rossi D.L."/>
            <person name="Zurawski S.M."/>
            <person name="Vega F. Jr."/>
            <person name="Kastelein R.A."/>
            <person name="Wagner J.L."/>
            <person name="Hannum C.H."/>
            <person name="Zlotnik A."/>
        </authorList>
    </citation>
    <scope>NUCLEOTIDE SEQUENCE [MRNA]</scope>
    <source>
        <strain>BALB/cJ</strain>
        <tissue>Thymocyte</tissue>
    </source>
</reference>
<reference key="2">
    <citation type="journal article" date="1996" name="Gene">
        <title>Complete nucleotide sequence of the mouse CTLA8 gene.</title>
        <authorList>
            <person name="Yao Z."/>
            <person name="Timour M."/>
            <person name="Painter S."/>
            <person name="Fanslow W."/>
            <person name="Spriggs M.K."/>
        </authorList>
    </citation>
    <scope>NUCLEOTIDE SEQUENCE [GENOMIC DNA] OF 12-158</scope>
    <source>
        <strain>129/Sv</strain>
        <tissue>T-cell</tissue>
    </source>
</reference>
<reference key="3">
    <citation type="journal article" date="2005" name="Nat. Immunol.">
        <title>A distinct lineage of CD4 T cells regulates tissue inflammation by producing interleukin 17.</title>
        <authorList>
            <person name="Park H."/>
            <person name="Li Z."/>
            <person name="Yang X.O."/>
            <person name="Chang S.H."/>
            <person name="Nurieva R."/>
            <person name="Wang Y.H."/>
            <person name="Wang Y."/>
            <person name="Hood L."/>
            <person name="Zhu Z."/>
            <person name="Tian Q."/>
            <person name="Dong C."/>
        </authorList>
    </citation>
    <scope>FUNCTION</scope>
    <scope>INDUCTION BY IL23A-IL12B</scope>
</reference>
<reference key="4">
    <citation type="journal article" date="2006" name="Cell">
        <title>The orphan nuclear receptor RORgammat directs the differentiation program of proinflammatory IL-17+ T helper cells.</title>
        <authorList>
            <person name="Ivanov I.I."/>
            <person name="McKenzie B.S."/>
            <person name="Zhou L."/>
            <person name="Tadokoro C.E."/>
            <person name="Lepelley A."/>
            <person name="Lafaille J.J."/>
            <person name="Cua D.J."/>
            <person name="Littman D.R."/>
        </authorList>
    </citation>
    <scope>INDUCTION BY IL6 AND TGFB1</scope>
    <scope>TISSUE SPECIFICITY</scope>
</reference>
<reference key="5">
    <citation type="journal article" date="2007" name="J. Exp. Med.">
        <title>Identification of an IL-17-producing NK1.1(neg) iNKT cell population involved in airway neutrophilia.</title>
        <authorList>
            <person name="Michel M.L."/>
            <person name="Keller A.C."/>
            <person name="Paget C."/>
            <person name="Fujio M."/>
            <person name="Trottein F."/>
            <person name="Savage P.B."/>
            <person name="Wong C.H."/>
            <person name="Schneider E."/>
            <person name="Dy M."/>
            <person name="Leite-de-Moraes M.C."/>
        </authorList>
    </citation>
    <scope>FUNCTION</scope>
    <scope>INDUCTION</scope>
    <scope>TISSUE SPECIFICITY</scope>
</reference>
<reference key="6">
    <citation type="journal article" date="2007" name="J. Immunol.">
        <title>Resident Vdelta1+ gammadelta T cells control early infiltration of neutrophils after Escherichia coli infection via IL-17 production.</title>
        <authorList>
            <person name="Shibata K."/>
            <person name="Yamada H."/>
            <person name="Hara H."/>
            <person name="Kishihara K."/>
            <person name="Yoshikai Y."/>
        </authorList>
    </citation>
    <scope>FUNCTION</scope>
    <scope>INDUCTION BY IL23A-IL12B</scope>
    <scope>TISSUE SPECIFICITY</scope>
</reference>
<reference key="7">
    <citation type="journal article" date="2007" name="J. Immunol.">
        <title>Identification of the IL-17 receptor related molecule IL-17RC as the receptor for IL-17F.</title>
        <authorList>
            <person name="Kuestner R.E."/>
            <person name="Taft D.W."/>
            <person name="Haran A."/>
            <person name="Brandt C.S."/>
            <person name="Brender T."/>
            <person name="Lum K."/>
            <person name="Harder B."/>
            <person name="Okada S."/>
            <person name="Ostrander C.D."/>
            <person name="Kreindler J.L."/>
            <person name="Aujla S.J."/>
            <person name="Reardon B."/>
            <person name="Moore M."/>
            <person name="Shea P."/>
            <person name="Schreckhise R."/>
            <person name="Bukowski T.R."/>
            <person name="Presnell S."/>
            <person name="Guerra-Lewis P."/>
            <person name="Parrish-Novak J."/>
            <person name="Ellsworth J.L."/>
            <person name="Jaspers S."/>
            <person name="Lewis K.E."/>
            <person name="Appleby M."/>
            <person name="Kolls J.K."/>
            <person name="Rixon M."/>
            <person name="West J.W."/>
            <person name="Gao Z."/>
            <person name="Levin S.D."/>
        </authorList>
    </citation>
    <scope>FUNCTION</scope>
</reference>
<reference key="8">
    <citation type="journal article" date="2007" name="J. Immunol.">
        <title>An IL-17F/A heterodimer protein is produced by mouse Th17 cells and induces airway neutrophil recruitment.</title>
        <authorList>
            <person name="Liang S.C."/>
            <person name="Long A.J."/>
            <person name="Bennett F."/>
            <person name="Whitters M.J."/>
            <person name="Karim R."/>
            <person name="Collins M."/>
            <person name="Goldman S.J."/>
            <person name="Dunussi-Joannopoulos K."/>
            <person name="Williams C.M."/>
            <person name="Wright J.F."/>
            <person name="Fouser L.A."/>
        </authorList>
    </citation>
    <scope>FUNCTION</scope>
    <scope>INDUCTION</scope>
    <scope>TISSUE SPECIFICITY</scope>
    <scope>SUBUNIT</scope>
    <scope>SUBCELLULAR LOCATION</scope>
</reference>
<reference key="9">
    <citation type="journal article" date="2008" name="Nat. Immunol.">
        <title>Interleukin 17-producing T helper cells and interleukin 17 orchestrate autoreactive germinal center development in autoimmune BXD2 mice.</title>
        <authorList>
            <person name="Hsu H.C."/>
            <person name="Yang P."/>
            <person name="Wang J."/>
            <person name="Wu Q."/>
            <person name="Myers R."/>
            <person name="Chen J."/>
            <person name="Yi J."/>
            <person name="Guentert T."/>
            <person name="Tousson A."/>
            <person name="Stanus A.L."/>
            <person name="Le T.V."/>
            <person name="Lorenz R.G."/>
            <person name="Xu H."/>
            <person name="Kolls J.K."/>
            <person name="Carter R.H."/>
            <person name="Chaplin D.D."/>
            <person name="Williams R.W."/>
            <person name="Mountz J.D."/>
        </authorList>
    </citation>
    <scope>FUNCTION</scope>
</reference>
<reference key="10">
    <citation type="journal article" date="2009" name="Immunity">
        <title>Differential roles of interleukin-17A and -17F in host defense against mucoepithelial bacterial infection and allergic responses.</title>
        <authorList>
            <person name="Ishigame H."/>
            <person name="Kakuta S."/>
            <person name="Nagai T."/>
            <person name="Kadoki M."/>
            <person name="Nambu A."/>
            <person name="Komiyama Y."/>
            <person name="Fujikado N."/>
            <person name="Tanahashi Y."/>
            <person name="Akitsu A."/>
            <person name="Kotaki H."/>
            <person name="Sudo K."/>
            <person name="Nakae S."/>
            <person name="Sasakawa C."/>
            <person name="Iwakura Y."/>
        </authorList>
    </citation>
    <scope>FUNCTION</scope>
    <scope>DISRUPTION PHENOTYPE</scope>
</reference>
<reference key="11">
    <citation type="journal article" date="2010" name="J. Clin. Invest.">
        <title>IL-17 is essential for host defense against cutaneous Staphylococcus aureus infection in mice.</title>
        <authorList>
            <person name="Cho J.S."/>
            <person name="Pietras E.M."/>
            <person name="Garcia N.C."/>
            <person name="Ramos R.I."/>
            <person name="Farzam D.M."/>
            <person name="Monroe H.R."/>
            <person name="Magorien J.E."/>
            <person name="Blauvelt A."/>
            <person name="Kolls J.K."/>
            <person name="Cheung A.L."/>
            <person name="Cheng G."/>
            <person name="Modlin R.L."/>
            <person name="Miller L.S."/>
        </authorList>
    </citation>
    <scope>FUNCTION</scope>
    <scope>TISSUE SPECIFICITY</scope>
    <scope>INDUCTION</scope>
</reference>
<reference key="12">
    <citation type="journal article" date="2011" name="Cell. Mol. Immunol.">
        <title>A critical role of IL-17 in modulating the B-cell response during H5N1 influenza virus infection.</title>
        <authorList>
            <person name="Wang X."/>
            <person name="Chan C.C."/>
            <person name="Yang M."/>
            <person name="Deng J."/>
            <person name="Poon V.K."/>
            <person name="Leung V.H."/>
            <person name="Ko K.H."/>
            <person name="Zhou J."/>
            <person name="Yuen K.Y."/>
            <person name="Zheng B.J."/>
            <person name="Lu L."/>
        </authorList>
    </citation>
    <scope>FUNCTION</scope>
</reference>
<reference key="13">
    <citation type="journal article" date="2013" name="J. Immunol.">
        <title>IL-17-secreting innate lymphoid cells are essential for host defense against fungal infection.</title>
        <authorList>
            <person name="Gladiator A."/>
            <person name="Wangler N."/>
            <person name="Trautwein-Weidner K."/>
            <person name="LeibundGut-Landmann S."/>
        </authorList>
    </citation>
    <scope>FUNCTION</scope>
    <scope>TISSUE SPECIFICITY</scope>
    <scope>INDUCTION</scope>
</reference>
<reference key="14">
    <citation type="journal article" date="2015" name="Immunity">
        <title>Interleukin-23-Independent IL-17 Production Regulates Intestinal Epithelial Permeability.</title>
        <authorList>
            <person name="Lee J.S."/>
            <person name="Tato C.M."/>
            <person name="Joyce-Shaikh B."/>
            <person name="Gulen M.F."/>
            <person name="Gulan F."/>
            <person name="Cayatte C."/>
            <person name="Chen Y."/>
            <person name="Blumenschein W.M."/>
            <person name="Judo M."/>
            <person name="Ayanoglu G."/>
            <person name="McClanahan T.K."/>
            <person name="Li X."/>
            <person name="Cua D.J."/>
        </authorList>
    </citation>
    <scope>FUNCTION</scope>
    <scope>DISRUPTION PHENOTYPE</scope>
    <scope>TISSUE SPECIFICITY</scope>
    <scope>INDUCTION</scope>
</reference>
<reference key="15">
    <citation type="journal article" date="2016" name="Cell Host Microbe">
        <title>IL-17 Receptor Signaling in the Lung Epithelium Is Required for Mucosal Chemokine Gradients and Pulmonary Host Defense against K. pneumoniae.</title>
        <authorList>
            <person name="Chen K."/>
            <person name="Eddens T."/>
            <person name="Trevejo-Nunez G."/>
            <person name="Way E.E."/>
            <person name="Elsegeiny W."/>
            <person name="Ricks D.M."/>
            <person name="Garg A.V."/>
            <person name="Erb C.J."/>
            <person name="Bo M."/>
            <person name="Wang T."/>
            <person name="Chen W."/>
            <person name="Lee J.S."/>
            <person name="Gaffen S.L."/>
            <person name="Kolls J.K."/>
        </authorList>
    </citation>
    <scope>FUNCTION</scope>
</reference>
<reference key="16">
    <citation type="journal article" date="2016" name="PLoS Pathog.">
        <title>IL-17A Promotes Pulmonary B-1a Cell Differentiation via Induction of Blimp-1 Expression during Influenza Virus Infection.</title>
        <authorList>
            <person name="Wang X."/>
            <person name="Ma K."/>
            <person name="Chen M."/>
            <person name="Ko K.H."/>
            <person name="Zheng B.J."/>
            <person name="Lu L."/>
        </authorList>
    </citation>
    <scope>FUNCTION</scope>
    <scope>DISRUPTION PHENOTYPE</scope>
</reference>
<reference key="17">
    <citation type="journal article" date="2017" name="J. Virol.">
        <title>Interleukin-17A Promotes CD8+ T Cell Cytotoxicity To Facilitate West Nile Virus Clearance.</title>
        <authorList>
            <person name="Acharya D."/>
            <person name="Wang P."/>
            <person name="Paul A.M."/>
            <person name="Dai J."/>
            <person name="Gate D."/>
            <person name="Lowery J.E."/>
            <person name="Stokic D.S."/>
            <person name="Leis A.A."/>
            <person name="Flavell R.A."/>
            <person name="Town T."/>
            <person name="Fikrig E."/>
            <person name="Bai F."/>
        </authorList>
    </citation>
    <scope>FUNCTION</scope>
    <scope>DISRUPTION PHENOTYPE</scope>
</reference>
<reference key="18">
    <citation type="journal article" date="2017" name="Immunity">
        <title>An Ocular Commensal Protects against Corneal Infection by Driving an Interleukin-17 Response from Mucosal gammadelta T Cells.</title>
        <authorList>
            <person name="St Leger A.J."/>
            <person name="Desai J.V."/>
            <person name="Drummond R.A."/>
            <person name="Kugadas A."/>
            <person name="Almaghrabi F."/>
            <person name="Silver P."/>
            <person name="Raychaudhuri K."/>
            <person name="Gadjeva M."/>
            <person name="Iwakura Y."/>
            <person name="Lionakis M.S."/>
            <person name="Caspi R.R."/>
        </authorList>
    </citation>
    <scope>FUNCTION</scope>
    <scope>INDUCTION</scope>
    <scope>TISSUE SPECIFICITY</scope>
</reference>
<organism>
    <name type="scientific">Mus musculus</name>
    <name type="common">Mouse</name>
    <dbReference type="NCBI Taxonomy" id="10090"/>
    <lineage>
        <taxon>Eukaryota</taxon>
        <taxon>Metazoa</taxon>
        <taxon>Chordata</taxon>
        <taxon>Craniata</taxon>
        <taxon>Vertebrata</taxon>
        <taxon>Euteleostomi</taxon>
        <taxon>Mammalia</taxon>
        <taxon>Eutheria</taxon>
        <taxon>Euarchontoglires</taxon>
        <taxon>Glires</taxon>
        <taxon>Rodentia</taxon>
        <taxon>Myomorpha</taxon>
        <taxon>Muroidea</taxon>
        <taxon>Muridae</taxon>
        <taxon>Murinae</taxon>
        <taxon>Mus</taxon>
        <taxon>Mus</taxon>
    </lineage>
</organism>
<accession>Q62386</accession>
<accession>Q60971</accession>
<protein>
    <recommendedName>
        <fullName>Interleukin-17A</fullName>
        <shortName>IL-17</shortName>
        <shortName>IL-17A</shortName>
    </recommendedName>
    <alternativeName>
        <fullName>Cytotoxic T-lymphocyte-associated antigen 8</fullName>
        <shortName>CTLA-8</shortName>
    </alternativeName>
</protein>
<proteinExistence type="evidence at protein level"/>
<feature type="signal peptide" evidence="3">
    <location>
        <begin position="1"/>
        <end position="25"/>
    </location>
</feature>
<feature type="chain" id="PRO_0000015424" description="Interleukin-17A">
    <location>
        <begin position="26"/>
        <end position="158"/>
    </location>
</feature>
<feature type="glycosylation site" description="N-linked (GlcNAc...) asparagine" evidence="3">
    <location>
        <position position="71"/>
    </location>
</feature>
<feature type="disulfide bond" evidence="1">
    <location>
        <begin position="97"/>
        <end position="147"/>
    </location>
</feature>
<feature type="disulfide bond" evidence="1">
    <location>
        <begin position="102"/>
        <end position="149"/>
    </location>
</feature>
<sequence length="158" mass="17490">MSPGRASSVSLMLLLLLSLAATVKAAAIIPQSSACPNTEAKDFLQNVKVNLKVFNSLGAKVSSRRPSDYLNRSTSPWTLHRNEDPDRYPSVIWEAQCRHQRCVNAEGKLDHHMNSVLIQQEILVLKREPESCPFTFRVEKMLVGVGCTCVASIVRQAA</sequence>